<feature type="chain" id="PRO_1000212258" description="Ribosomal RNA small subunit methyltransferase A">
    <location>
        <begin position="1"/>
        <end position="255"/>
    </location>
</feature>
<feature type="binding site" evidence="1">
    <location>
        <position position="12"/>
    </location>
    <ligand>
        <name>S-adenosyl-L-methionine</name>
        <dbReference type="ChEBI" id="CHEBI:59789"/>
    </ligand>
</feature>
<feature type="binding site" evidence="1">
    <location>
        <position position="14"/>
    </location>
    <ligand>
        <name>S-adenosyl-L-methionine</name>
        <dbReference type="ChEBI" id="CHEBI:59789"/>
    </ligand>
</feature>
<feature type="binding site" evidence="1">
    <location>
        <position position="39"/>
    </location>
    <ligand>
        <name>S-adenosyl-L-methionine</name>
        <dbReference type="ChEBI" id="CHEBI:59789"/>
    </ligand>
</feature>
<feature type="binding site" evidence="1">
    <location>
        <position position="60"/>
    </location>
    <ligand>
        <name>S-adenosyl-L-methionine</name>
        <dbReference type="ChEBI" id="CHEBI:59789"/>
    </ligand>
</feature>
<feature type="binding site" evidence="1">
    <location>
        <position position="81"/>
    </location>
    <ligand>
        <name>S-adenosyl-L-methionine</name>
        <dbReference type="ChEBI" id="CHEBI:59789"/>
    </ligand>
</feature>
<feature type="binding site" evidence="1">
    <location>
        <position position="103"/>
    </location>
    <ligand>
        <name>S-adenosyl-L-methionine</name>
        <dbReference type="ChEBI" id="CHEBI:59789"/>
    </ligand>
</feature>
<organism>
    <name type="scientific">Variovorax paradoxus (strain S110)</name>
    <dbReference type="NCBI Taxonomy" id="543728"/>
    <lineage>
        <taxon>Bacteria</taxon>
        <taxon>Pseudomonadati</taxon>
        <taxon>Pseudomonadota</taxon>
        <taxon>Betaproteobacteria</taxon>
        <taxon>Burkholderiales</taxon>
        <taxon>Comamonadaceae</taxon>
        <taxon>Variovorax</taxon>
    </lineage>
</organism>
<gene>
    <name evidence="1" type="primary">rsmA</name>
    <name evidence="1" type="synonym">ksgA</name>
    <name type="ordered locus">Vapar_5273</name>
</gene>
<protein>
    <recommendedName>
        <fullName evidence="1">Ribosomal RNA small subunit methyltransferase A</fullName>
        <ecNumber evidence="1">2.1.1.182</ecNumber>
    </recommendedName>
    <alternativeName>
        <fullName evidence="1">16S rRNA (adenine(1518)-N(6)/adenine(1519)-N(6))-dimethyltransferase</fullName>
    </alternativeName>
    <alternativeName>
        <fullName evidence="1">16S rRNA dimethyladenosine transferase</fullName>
    </alternativeName>
    <alternativeName>
        <fullName evidence="1">16S rRNA dimethylase</fullName>
    </alternativeName>
    <alternativeName>
        <fullName evidence="1">S-adenosylmethionine-6-N', N'-adenosyl(rRNA) dimethyltransferase</fullName>
    </alternativeName>
</protein>
<keyword id="KW-0963">Cytoplasm</keyword>
<keyword id="KW-0489">Methyltransferase</keyword>
<keyword id="KW-0694">RNA-binding</keyword>
<keyword id="KW-0698">rRNA processing</keyword>
<keyword id="KW-0949">S-adenosyl-L-methionine</keyword>
<keyword id="KW-0808">Transferase</keyword>
<dbReference type="EC" id="2.1.1.182" evidence="1"/>
<dbReference type="EMBL" id="CP001635">
    <property type="protein sequence ID" value="ACS21875.1"/>
    <property type="molecule type" value="Genomic_DNA"/>
</dbReference>
<dbReference type="SMR" id="C5CS95"/>
<dbReference type="STRING" id="543728.Vapar_5273"/>
<dbReference type="KEGG" id="vap:Vapar_5273"/>
<dbReference type="eggNOG" id="COG0030">
    <property type="taxonomic scope" value="Bacteria"/>
</dbReference>
<dbReference type="HOGENOM" id="CLU_041220_0_1_4"/>
<dbReference type="OrthoDB" id="9814755at2"/>
<dbReference type="GO" id="GO:0005829">
    <property type="term" value="C:cytosol"/>
    <property type="evidence" value="ECO:0007669"/>
    <property type="project" value="TreeGrafter"/>
</dbReference>
<dbReference type="GO" id="GO:0052908">
    <property type="term" value="F:16S rRNA (adenine(1518)-N(6)/adenine(1519)-N(6))-dimethyltransferase activity"/>
    <property type="evidence" value="ECO:0007669"/>
    <property type="project" value="UniProtKB-EC"/>
</dbReference>
<dbReference type="GO" id="GO:0003723">
    <property type="term" value="F:RNA binding"/>
    <property type="evidence" value="ECO:0007669"/>
    <property type="project" value="UniProtKB-KW"/>
</dbReference>
<dbReference type="Gene3D" id="1.10.8.100">
    <property type="entry name" value="Ribosomal RNA adenine dimethylase-like, domain 2"/>
    <property type="match status" value="1"/>
</dbReference>
<dbReference type="Gene3D" id="3.40.50.150">
    <property type="entry name" value="Vaccinia Virus protein VP39"/>
    <property type="match status" value="1"/>
</dbReference>
<dbReference type="HAMAP" id="MF_00607">
    <property type="entry name" value="16SrRNA_methyltr_A"/>
    <property type="match status" value="1"/>
</dbReference>
<dbReference type="InterPro" id="IPR001737">
    <property type="entry name" value="KsgA/Erm"/>
</dbReference>
<dbReference type="InterPro" id="IPR023165">
    <property type="entry name" value="rRNA_Ade_diMease-like_C"/>
</dbReference>
<dbReference type="InterPro" id="IPR020596">
    <property type="entry name" value="rRNA_Ade_Mease_Trfase_CS"/>
</dbReference>
<dbReference type="InterPro" id="IPR020598">
    <property type="entry name" value="rRNA_Ade_methylase_Trfase_N"/>
</dbReference>
<dbReference type="InterPro" id="IPR011530">
    <property type="entry name" value="rRNA_adenine_dimethylase"/>
</dbReference>
<dbReference type="InterPro" id="IPR029063">
    <property type="entry name" value="SAM-dependent_MTases_sf"/>
</dbReference>
<dbReference type="NCBIfam" id="TIGR00755">
    <property type="entry name" value="ksgA"/>
    <property type="match status" value="1"/>
</dbReference>
<dbReference type="PANTHER" id="PTHR11727">
    <property type="entry name" value="DIMETHYLADENOSINE TRANSFERASE"/>
    <property type="match status" value="1"/>
</dbReference>
<dbReference type="PANTHER" id="PTHR11727:SF7">
    <property type="entry name" value="DIMETHYLADENOSINE TRANSFERASE-RELATED"/>
    <property type="match status" value="1"/>
</dbReference>
<dbReference type="Pfam" id="PF00398">
    <property type="entry name" value="RrnaAD"/>
    <property type="match status" value="1"/>
</dbReference>
<dbReference type="SMART" id="SM00650">
    <property type="entry name" value="rADc"/>
    <property type="match status" value="1"/>
</dbReference>
<dbReference type="SUPFAM" id="SSF53335">
    <property type="entry name" value="S-adenosyl-L-methionine-dependent methyltransferases"/>
    <property type="match status" value="1"/>
</dbReference>
<dbReference type="PROSITE" id="PS01131">
    <property type="entry name" value="RRNA_A_DIMETH"/>
    <property type="match status" value="1"/>
</dbReference>
<dbReference type="PROSITE" id="PS51689">
    <property type="entry name" value="SAM_RNA_A_N6_MT"/>
    <property type="match status" value="1"/>
</dbReference>
<accession>C5CS95</accession>
<proteinExistence type="inferred from homology"/>
<reference key="1">
    <citation type="journal article" date="2011" name="J. Bacteriol.">
        <title>Complete genome sequence of the metabolically versatile plant growth-promoting endophyte, Variovorax paradoxus S110.</title>
        <authorList>
            <person name="Han J.I."/>
            <person name="Choi H.K."/>
            <person name="Lee S.W."/>
            <person name="Orwin P.M."/>
            <person name="Kim J."/>
            <person name="Laroe S.L."/>
            <person name="Kim T.G."/>
            <person name="O'Neil J."/>
            <person name="Leadbetter J.R."/>
            <person name="Lee S.Y."/>
            <person name="Hur C.G."/>
            <person name="Spain J.C."/>
            <person name="Ovchinnikova G."/>
            <person name="Goodwin L."/>
            <person name="Han C."/>
        </authorList>
    </citation>
    <scope>NUCLEOTIDE SEQUENCE [LARGE SCALE GENOMIC DNA]</scope>
    <source>
        <strain>S110</strain>
    </source>
</reference>
<evidence type="ECO:0000255" key="1">
    <source>
        <dbReference type="HAMAP-Rule" id="MF_00607"/>
    </source>
</evidence>
<name>RSMA_VARPS</name>
<sequence>MAHIARKRFGQHFLSDGGIIDAIVQEIAPQPGDAMVEIGPGLAALTQPLVERLGRLTVIELDRDLAKRLREHPQLEVIESDVLKVDFAALATRFAAPLRVVGNLPYNISTPILFHLLGFAHLIADQHFMLQKEVIDRMVARPATSDYSRLSVMLQWRYRMENVLFVPPESFDPPPRVDSAVVRMVPLAEPPAVDAARLGEIVQVAFSQRRKIMRHTLGKWLDEHGFAGQFDAQRRAEEVPVAEYVALAQAVPPRP</sequence>
<comment type="function">
    <text evidence="1">Specifically dimethylates two adjacent adenosines (A1518 and A1519) in the loop of a conserved hairpin near the 3'-end of 16S rRNA in the 30S particle. May play a critical role in biogenesis of 30S subunits.</text>
</comment>
<comment type="catalytic activity">
    <reaction evidence="1">
        <text>adenosine(1518)/adenosine(1519) in 16S rRNA + 4 S-adenosyl-L-methionine = N(6)-dimethyladenosine(1518)/N(6)-dimethyladenosine(1519) in 16S rRNA + 4 S-adenosyl-L-homocysteine + 4 H(+)</text>
        <dbReference type="Rhea" id="RHEA:19609"/>
        <dbReference type="Rhea" id="RHEA-COMP:10232"/>
        <dbReference type="Rhea" id="RHEA-COMP:10233"/>
        <dbReference type="ChEBI" id="CHEBI:15378"/>
        <dbReference type="ChEBI" id="CHEBI:57856"/>
        <dbReference type="ChEBI" id="CHEBI:59789"/>
        <dbReference type="ChEBI" id="CHEBI:74411"/>
        <dbReference type="ChEBI" id="CHEBI:74493"/>
        <dbReference type="EC" id="2.1.1.182"/>
    </reaction>
</comment>
<comment type="subcellular location">
    <subcellularLocation>
        <location evidence="1">Cytoplasm</location>
    </subcellularLocation>
</comment>
<comment type="similarity">
    <text evidence="1">Belongs to the class I-like SAM-binding methyltransferase superfamily. rRNA adenine N(6)-methyltransferase family. RsmA subfamily.</text>
</comment>